<reference key="1">
    <citation type="journal article" date="2002" name="Nature">
        <title>The genome sequence of Schizosaccharomyces pombe.</title>
        <authorList>
            <person name="Wood V."/>
            <person name="Gwilliam R."/>
            <person name="Rajandream M.A."/>
            <person name="Lyne M.H."/>
            <person name="Lyne R."/>
            <person name="Stewart A."/>
            <person name="Sgouros J.G."/>
            <person name="Peat N."/>
            <person name="Hayles J."/>
            <person name="Baker S.G."/>
            <person name="Basham D."/>
            <person name="Bowman S."/>
            <person name="Brooks K."/>
            <person name="Brown D."/>
            <person name="Brown S."/>
            <person name="Chillingworth T."/>
            <person name="Churcher C.M."/>
            <person name="Collins M."/>
            <person name="Connor R."/>
            <person name="Cronin A."/>
            <person name="Davis P."/>
            <person name="Feltwell T."/>
            <person name="Fraser A."/>
            <person name="Gentles S."/>
            <person name="Goble A."/>
            <person name="Hamlin N."/>
            <person name="Harris D.E."/>
            <person name="Hidalgo J."/>
            <person name="Hodgson G."/>
            <person name="Holroyd S."/>
            <person name="Hornsby T."/>
            <person name="Howarth S."/>
            <person name="Huckle E.J."/>
            <person name="Hunt S."/>
            <person name="Jagels K."/>
            <person name="James K.D."/>
            <person name="Jones L."/>
            <person name="Jones M."/>
            <person name="Leather S."/>
            <person name="McDonald S."/>
            <person name="McLean J."/>
            <person name="Mooney P."/>
            <person name="Moule S."/>
            <person name="Mungall K.L."/>
            <person name="Murphy L.D."/>
            <person name="Niblett D."/>
            <person name="Odell C."/>
            <person name="Oliver K."/>
            <person name="O'Neil S."/>
            <person name="Pearson D."/>
            <person name="Quail M.A."/>
            <person name="Rabbinowitsch E."/>
            <person name="Rutherford K.M."/>
            <person name="Rutter S."/>
            <person name="Saunders D."/>
            <person name="Seeger K."/>
            <person name="Sharp S."/>
            <person name="Skelton J."/>
            <person name="Simmonds M.N."/>
            <person name="Squares R."/>
            <person name="Squares S."/>
            <person name="Stevens K."/>
            <person name="Taylor K."/>
            <person name="Taylor R.G."/>
            <person name="Tivey A."/>
            <person name="Walsh S.V."/>
            <person name="Warren T."/>
            <person name="Whitehead S."/>
            <person name="Woodward J.R."/>
            <person name="Volckaert G."/>
            <person name="Aert R."/>
            <person name="Robben J."/>
            <person name="Grymonprez B."/>
            <person name="Weltjens I."/>
            <person name="Vanstreels E."/>
            <person name="Rieger M."/>
            <person name="Schaefer M."/>
            <person name="Mueller-Auer S."/>
            <person name="Gabel C."/>
            <person name="Fuchs M."/>
            <person name="Duesterhoeft A."/>
            <person name="Fritzc C."/>
            <person name="Holzer E."/>
            <person name="Moestl D."/>
            <person name="Hilbert H."/>
            <person name="Borzym K."/>
            <person name="Langer I."/>
            <person name="Beck A."/>
            <person name="Lehrach H."/>
            <person name="Reinhardt R."/>
            <person name="Pohl T.M."/>
            <person name="Eger P."/>
            <person name="Zimmermann W."/>
            <person name="Wedler H."/>
            <person name="Wambutt R."/>
            <person name="Purnelle B."/>
            <person name="Goffeau A."/>
            <person name="Cadieu E."/>
            <person name="Dreano S."/>
            <person name="Gloux S."/>
            <person name="Lelaure V."/>
            <person name="Mottier S."/>
            <person name="Galibert F."/>
            <person name="Aves S.J."/>
            <person name="Xiang Z."/>
            <person name="Hunt C."/>
            <person name="Moore K."/>
            <person name="Hurst S.M."/>
            <person name="Lucas M."/>
            <person name="Rochet M."/>
            <person name="Gaillardin C."/>
            <person name="Tallada V.A."/>
            <person name="Garzon A."/>
            <person name="Thode G."/>
            <person name="Daga R.R."/>
            <person name="Cruzado L."/>
            <person name="Jimenez J."/>
            <person name="Sanchez M."/>
            <person name="del Rey F."/>
            <person name="Benito J."/>
            <person name="Dominguez A."/>
            <person name="Revuelta J.L."/>
            <person name="Moreno S."/>
            <person name="Armstrong J."/>
            <person name="Forsburg S.L."/>
            <person name="Cerutti L."/>
            <person name="Lowe T."/>
            <person name="McCombie W.R."/>
            <person name="Paulsen I."/>
            <person name="Potashkin J."/>
            <person name="Shpakovski G.V."/>
            <person name="Ussery D."/>
            <person name="Barrell B.G."/>
            <person name="Nurse P."/>
        </authorList>
    </citation>
    <scope>NUCLEOTIDE SEQUENCE [LARGE SCALE GENOMIC DNA]</scope>
    <source>
        <strain>972 / ATCC 24843</strain>
    </source>
</reference>
<reference key="2">
    <citation type="journal article" date="1997" name="DNA Res.">
        <title>Identification of open reading frames in Schizosaccharomyces pombe cDNAs.</title>
        <authorList>
            <person name="Yoshioka S."/>
            <person name="Kato K."/>
            <person name="Nakai K."/>
            <person name="Okayama H."/>
            <person name="Nojima H."/>
        </authorList>
    </citation>
    <scope>NUCLEOTIDE SEQUENCE [LARGE SCALE MRNA] OF 238-577</scope>
    <source>
        <strain>PR745</strain>
    </source>
</reference>
<comment type="cofactor">
    <cofactor evidence="1">
        <name>Zn(2+)</name>
        <dbReference type="ChEBI" id="CHEBI:29105"/>
    </cofactor>
    <text evidence="1">Binds 1 zinc ion.</text>
</comment>
<comment type="similarity">
    <text evidence="4">Belongs to the peptidase M10B family.</text>
</comment>
<keyword id="KW-0378">Hydrolase</keyword>
<keyword id="KW-0430">Lectin</keyword>
<keyword id="KW-0479">Metal-binding</keyword>
<keyword id="KW-0482">Metalloprotease</keyword>
<keyword id="KW-0645">Protease</keyword>
<keyword id="KW-1185">Reference proteome</keyword>
<keyword id="KW-0862">Zinc</keyword>
<gene>
    <name type="ORF">SPAC607.06c</name>
</gene>
<dbReference type="EC" id="3.4.24.-"/>
<dbReference type="EMBL" id="CU329670">
    <property type="protein sequence ID" value="CAB63793.1"/>
    <property type="molecule type" value="Genomic_DNA"/>
</dbReference>
<dbReference type="EMBL" id="D89196">
    <property type="protein sequence ID" value="BAA13857.1"/>
    <property type="status" value="ALT_SEQ"/>
    <property type="molecule type" value="mRNA"/>
</dbReference>
<dbReference type="PIR" id="T42995">
    <property type="entry name" value="T42995"/>
</dbReference>
<dbReference type="PIR" id="T50226">
    <property type="entry name" value="T50226"/>
</dbReference>
<dbReference type="RefSeq" id="NP_593595.1">
    <property type="nucleotide sequence ID" value="NM_001019026.2"/>
</dbReference>
<dbReference type="SMR" id="Q9US12"/>
<dbReference type="BioGRID" id="279600">
    <property type="interactions" value="2"/>
</dbReference>
<dbReference type="FunCoup" id="Q9US12">
    <property type="interactions" value="7"/>
</dbReference>
<dbReference type="STRING" id="284812.Q9US12"/>
<dbReference type="iPTMnet" id="Q9US12"/>
<dbReference type="PaxDb" id="4896-SPAC607.06c.1"/>
<dbReference type="EnsemblFungi" id="SPAC607.06c.1">
    <property type="protein sequence ID" value="SPAC607.06c.1:pep"/>
    <property type="gene ID" value="SPAC607.06c"/>
</dbReference>
<dbReference type="KEGG" id="spo:2543169"/>
<dbReference type="PomBase" id="SPAC607.06c"/>
<dbReference type="VEuPathDB" id="FungiDB:SPAC607.06c"/>
<dbReference type="eggNOG" id="KOG4525">
    <property type="taxonomic scope" value="Eukaryota"/>
</dbReference>
<dbReference type="HOGENOM" id="CLU_009601_2_1_1"/>
<dbReference type="InParanoid" id="Q9US12"/>
<dbReference type="OMA" id="MFRNNFG"/>
<dbReference type="PhylomeDB" id="Q9US12"/>
<dbReference type="PRO" id="PR:Q9US12"/>
<dbReference type="Proteomes" id="UP000002485">
    <property type="component" value="Chromosome I"/>
</dbReference>
<dbReference type="GO" id="GO:0032153">
    <property type="term" value="C:cell division site"/>
    <property type="evidence" value="ECO:0007005"/>
    <property type="project" value="PomBase"/>
</dbReference>
<dbReference type="GO" id="GO:0005829">
    <property type="term" value="C:cytosol"/>
    <property type="evidence" value="ECO:0007005"/>
    <property type="project" value="PomBase"/>
</dbReference>
<dbReference type="GO" id="GO:0005634">
    <property type="term" value="C:nucleus"/>
    <property type="evidence" value="ECO:0007005"/>
    <property type="project" value="PomBase"/>
</dbReference>
<dbReference type="GO" id="GO:0030246">
    <property type="term" value="F:carbohydrate binding"/>
    <property type="evidence" value="ECO:0007669"/>
    <property type="project" value="UniProtKB-KW"/>
</dbReference>
<dbReference type="GO" id="GO:0046872">
    <property type="term" value="F:metal ion binding"/>
    <property type="evidence" value="ECO:0007669"/>
    <property type="project" value="UniProtKB-KW"/>
</dbReference>
<dbReference type="GO" id="GO:0008237">
    <property type="term" value="F:metallopeptidase activity"/>
    <property type="evidence" value="ECO:0000255"/>
    <property type="project" value="PomBase"/>
</dbReference>
<dbReference type="GO" id="GO:0006508">
    <property type="term" value="P:proteolysis"/>
    <property type="evidence" value="ECO:0007669"/>
    <property type="project" value="UniProtKB-KW"/>
</dbReference>
<dbReference type="Gene3D" id="2.100.10.30">
    <property type="entry name" value="Jacalin-like lectin domain"/>
    <property type="match status" value="1"/>
</dbReference>
<dbReference type="InterPro" id="IPR001229">
    <property type="entry name" value="Jacalin-like_lectin_dom"/>
</dbReference>
<dbReference type="InterPro" id="IPR036404">
    <property type="entry name" value="Jacalin-like_lectin_dom_sf"/>
</dbReference>
<dbReference type="InterPro" id="IPR053002">
    <property type="entry name" value="Metalloproteinase_M10B"/>
</dbReference>
<dbReference type="InterPro" id="IPR021917">
    <property type="entry name" value="Unchr_Zn-peptidase-like"/>
</dbReference>
<dbReference type="PANTHER" id="PTHR21054:SF2">
    <property type="entry name" value="MIP04191P"/>
    <property type="match status" value="1"/>
</dbReference>
<dbReference type="PANTHER" id="PTHR21054">
    <property type="entry name" value="ZINC METALLOPROTEINASE-RELATED"/>
    <property type="match status" value="1"/>
</dbReference>
<dbReference type="Pfam" id="PF12044">
    <property type="entry name" value="Metallopep"/>
    <property type="match status" value="1"/>
</dbReference>
<dbReference type="SUPFAM" id="SSF51101">
    <property type="entry name" value="Mannose-binding lectins"/>
    <property type="match status" value="1"/>
</dbReference>
<dbReference type="SUPFAM" id="SSF55486">
    <property type="entry name" value="Metalloproteases ('zincins'), catalytic domain"/>
    <property type="match status" value="1"/>
</dbReference>
<dbReference type="PROSITE" id="PS51752">
    <property type="entry name" value="JACALIN_LECTIN"/>
    <property type="match status" value="1"/>
</dbReference>
<dbReference type="PROSITE" id="PS00142">
    <property type="entry name" value="ZINC_PROTEASE"/>
    <property type="match status" value="1"/>
</dbReference>
<organism>
    <name type="scientific">Schizosaccharomyces pombe (strain 972 / ATCC 24843)</name>
    <name type="common">Fission yeast</name>
    <dbReference type="NCBI Taxonomy" id="284812"/>
    <lineage>
        <taxon>Eukaryota</taxon>
        <taxon>Fungi</taxon>
        <taxon>Dikarya</taxon>
        <taxon>Ascomycota</taxon>
        <taxon>Taphrinomycotina</taxon>
        <taxon>Schizosaccharomycetes</taxon>
        <taxon>Schizosaccharomycetales</taxon>
        <taxon>Schizosaccharomycetaceae</taxon>
        <taxon>Schizosaccharomyces</taxon>
    </lineage>
</organism>
<name>YK66_SCHPO</name>
<feature type="chain" id="PRO_0000078180" description="Putative zinc metalloproteinase C607.06c">
    <location>
        <begin position="1"/>
        <end position="612"/>
    </location>
</feature>
<feature type="domain" description="Jacalin-type lectin" evidence="2">
    <location>
        <begin position="477"/>
        <end position="612"/>
    </location>
</feature>
<feature type="active site" evidence="3">
    <location>
        <position position="304"/>
    </location>
</feature>
<feature type="binding site" evidence="3">
    <location>
        <position position="303"/>
    </location>
    <ligand>
        <name>Zn(2+)</name>
        <dbReference type="ChEBI" id="CHEBI:29105"/>
        <note>catalytic</note>
    </ligand>
</feature>
<feature type="binding site" evidence="3">
    <location>
        <position position="307"/>
    </location>
    <ligand>
        <name>Zn(2+)</name>
        <dbReference type="ChEBI" id="CHEBI:29105"/>
        <note>catalytic</note>
    </ligand>
</feature>
<feature type="binding site" evidence="3">
    <location>
        <position position="313"/>
    </location>
    <ligand>
        <name>Zn(2+)</name>
        <dbReference type="ChEBI" id="CHEBI:29105"/>
        <note>catalytic</note>
    </ligand>
</feature>
<evidence type="ECO:0000250" key="1"/>
<evidence type="ECO:0000255" key="2">
    <source>
        <dbReference type="PROSITE-ProRule" id="PRU01088"/>
    </source>
</evidence>
<evidence type="ECO:0000255" key="3">
    <source>
        <dbReference type="PROSITE-ProRule" id="PRU10095"/>
    </source>
</evidence>
<evidence type="ECO:0000305" key="4"/>
<accession>Q9US12</accession>
<accession>P78846</accession>
<protein>
    <recommendedName>
        <fullName>Putative zinc metalloproteinase C607.06c</fullName>
        <ecNumber>3.4.24.-</ecNumber>
    </recommendedName>
</protein>
<sequence>MSQIILDNISQNETVYNRFVIIHGRVGPRASYCPQTINVKHHENSFPEQTWVVTDLYFKAIIHVVPGDNTILFTTDDGGKLELQVYYQLLVDNPFYCIAFIVGKDSDLSFDAPHGAKNDIDEGIRKLRCAAYLWQAFTAECMYRNGYGRRSFRIEESVQPDTMSCLSPWGTERLTATINILRSDKTAEEIRSVPPDQLFHIAGDAVDKLHLPEPWHYMCMFLDTRYDPSTQKIRGHVALGGGTDMHKLGVFGSHSLHSFPSALEYVVPVFSDARRIPSYLANDANESSTIWECANIGIGAMLHELGHTLGCPHQPDGIMLRSYPIFNRSFTTREFECVRTGSKGLAPVLAKDECSWHHLDMLRFFYHPCFKLPSDPTYPSDIETNYFVKGETITFVNSTGIFLIEIEYNGQTKGWKEFNPPVGEASLTDAEIRSLSNASSNQDYRVRVLSRNFKCIDLNNVPEIIKNAKVESSFGTVYRSERYGLRGCNGKELSNILIAPEKFKPTKIRVHCGLALDGIEVFFGDESVLLGNRGGSPHDFEIQGSQIVGFQIRCGAWVDGISIVLENGKTSPFYGNANGGGLKSYLVPKGFQLVGFYGTLGPFMDSIGFFIK</sequence>
<proteinExistence type="evidence at transcript level"/>